<feature type="chain" id="PRO_0000140910" description="Thymidylate synthase">
    <location>
        <begin position="1"/>
        <end position="317"/>
    </location>
</feature>
<feature type="active site" description="Nucleophile" evidence="2">
    <location>
        <position position="187"/>
    </location>
</feature>
<feature type="binding site" description="in other chain" evidence="2">
    <location>
        <position position="40"/>
    </location>
    <ligand>
        <name>dUMP</name>
        <dbReference type="ChEBI" id="CHEBI:246422"/>
        <note>ligand shared between dimeric partners</note>
    </ligand>
</feature>
<feature type="binding site" evidence="2">
    <location>
        <begin position="167"/>
        <end position="168"/>
    </location>
    <ligand>
        <name>dUMP</name>
        <dbReference type="ChEBI" id="CHEBI:246422"/>
        <note>ligand shared between dimeric partners</note>
    </ligand>
</feature>
<feature type="binding site" description="in other chain" evidence="2">
    <location>
        <begin position="216"/>
        <end position="219"/>
    </location>
    <ligand>
        <name>dUMP</name>
        <dbReference type="ChEBI" id="CHEBI:246422"/>
        <note>ligand shared between dimeric partners</note>
    </ligand>
</feature>
<feature type="binding site" evidence="2">
    <location>
        <position position="219"/>
    </location>
    <ligand>
        <name>(6R)-5,10-methylene-5,6,7,8-tetrahydrofolate</name>
        <dbReference type="ChEBI" id="CHEBI:15636"/>
    </ligand>
</feature>
<feature type="binding site" description="in other chain" evidence="2">
    <location>
        <position position="227"/>
    </location>
    <ligand>
        <name>dUMP</name>
        <dbReference type="ChEBI" id="CHEBI:246422"/>
        <note>ligand shared between dimeric partners</note>
    </ligand>
</feature>
<feature type="binding site" description="in other chain" evidence="2">
    <location>
        <begin position="257"/>
        <end position="259"/>
    </location>
    <ligand>
        <name>dUMP</name>
        <dbReference type="ChEBI" id="CHEBI:246422"/>
        <note>ligand shared between dimeric partners</note>
    </ligand>
</feature>
<feature type="helix" evidence="4">
    <location>
        <begin position="20"/>
        <end position="33"/>
    </location>
</feature>
<feature type="strand" evidence="4">
    <location>
        <begin position="35"/>
        <end position="37"/>
    </location>
</feature>
<feature type="strand" evidence="4">
    <location>
        <begin position="45"/>
        <end position="50"/>
    </location>
</feature>
<feature type="strand" evidence="4">
    <location>
        <begin position="54"/>
        <end position="57"/>
    </location>
</feature>
<feature type="helix" evidence="4">
    <location>
        <begin position="73"/>
        <end position="85"/>
    </location>
</feature>
<feature type="helix" evidence="4">
    <location>
        <begin position="91"/>
        <end position="94"/>
    </location>
</feature>
<feature type="turn" evidence="4">
    <location>
        <begin position="95"/>
        <end position="97"/>
    </location>
</feature>
<feature type="helix" evidence="4">
    <location>
        <begin position="102"/>
        <end position="105"/>
    </location>
</feature>
<feature type="helix" evidence="4">
    <location>
        <begin position="107"/>
        <end position="112"/>
    </location>
</feature>
<feature type="helix" evidence="4">
    <location>
        <begin position="127"/>
        <end position="133"/>
    </location>
</feature>
<feature type="helix" evidence="4">
    <location>
        <begin position="152"/>
        <end position="162"/>
    </location>
</feature>
<feature type="strand" evidence="4">
    <location>
        <begin position="170"/>
        <end position="172"/>
    </location>
</feature>
<feature type="turn" evidence="4">
    <location>
        <begin position="176"/>
        <end position="178"/>
    </location>
</feature>
<feature type="helix" evidence="4">
    <location>
        <begin position="179"/>
        <end position="181"/>
    </location>
</feature>
<feature type="strand" evidence="4">
    <location>
        <begin position="182"/>
        <end position="184"/>
    </location>
</feature>
<feature type="strand" evidence="4">
    <location>
        <begin position="187"/>
        <end position="196"/>
    </location>
</feature>
<feature type="strand" evidence="4">
    <location>
        <begin position="208"/>
        <end position="219"/>
    </location>
</feature>
<feature type="turn" evidence="4">
    <location>
        <begin position="220"/>
        <end position="222"/>
    </location>
</feature>
<feature type="helix" evidence="4">
    <location>
        <begin position="223"/>
        <end position="242"/>
    </location>
</feature>
<feature type="strand" evidence="4">
    <location>
        <begin position="245"/>
        <end position="259"/>
    </location>
</feature>
<feature type="helix" evidence="4">
    <location>
        <begin position="260"/>
        <end position="262"/>
    </location>
</feature>
<feature type="helix" evidence="4">
    <location>
        <begin position="263"/>
        <end position="270"/>
    </location>
</feature>
<feature type="strand" evidence="4">
    <location>
        <begin position="279"/>
        <end position="284"/>
    </location>
</feature>
<feature type="helix" evidence="4">
    <location>
        <begin position="286"/>
        <end position="289"/>
    </location>
</feature>
<feature type="helix" evidence="4">
    <location>
        <begin position="297"/>
        <end position="299"/>
    </location>
</feature>
<feature type="strand" evidence="4">
    <location>
        <begin position="300"/>
        <end position="303"/>
    </location>
</feature>
<evidence type="ECO:0000250" key="1"/>
<evidence type="ECO:0000250" key="2">
    <source>
        <dbReference type="UniProtKB" id="P0A884"/>
    </source>
</evidence>
<evidence type="ECO:0000305" key="3"/>
<evidence type="ECO:0007829" key="4">
    <source>
        <dbReference type="PDB" id="2AAZ"/>
    </source>
</evidence>
<dbReference type="EC" id="2.1.1.45"/>
<dbReference type="EMBL" id="AE017350">
    <property type="protein sequence ID" value="AAW45984.1"/>
    <property type="molecule type" value="Genomic_DNA"/>
</dbReference>
<dbReference type="RefSeq" id="XP_567501.1">
    <property type="nucleotide sequence ID" value="XM_567501.1"/>
</dbReference>
<dbReference type="PDB" id="2AAZ">
    <property type="method" value="X-ray"/>
    <property type="resolution" value="2.08 A"/>
    <property type="chains" value="A/B/C/D/E/F/G/H/I/J/K/L/M/N/O/P=1-317"/>
</dbReference>
<dbReference type="PDBsum" id="2AAZ"/>
<dbReference type="SMR" id="P0CS12"/>
<dbReference type="STRING" id="214684.P0CS12"/>
<dbReference type="PaxDb" id="214684-P0CS12"/>
<dbReference type="EnsemblFungi" id="AAW45984">
    <property type="protein sequence ID" value="AAW45984"/>
    <property type="gene ID" value="CNJ01230"/>
</dbReference>
<dbReference type="GeneID" id="3254191"/>
<dbReference type="KEGG" id="cne:CNJ01230"/>
<dbReference type="VEuPathDB" id="FungiDB:CNJ01230"/>
<dbReference type="eggNOG" id="KOG0673">
    <property type="taxonomic scope" value="Eukaryota"/>
</dbReference>
<dbReference type="HOGENOM" id="CLU_021669_0_2_1"/>
<dbReference type="InParanoid" id="P0CS12"/>
<dbReference type="OMA" id="AYGRFWR"/>
<dbReference type="OrthoDB" id="766at2759"/>
<dbReference type="UniPathway" id="UPA00575"/>
<dbReference type="EvolutionaryTrace" id="P0CS12"/>
<dbReference type="Proteomes" id="UP000002149">
    <property type="component" value="Chromosome 10"/>
</dbReference>
<dbReference type="GO" id="GO:0005829">
    <property type="term" value="C:cytosol"/>
    <property type="evidence" value="ECO:0000318"/>
    <property type="project" value="GO_Central"/>
</dbReference>
<dbReference type="GO" id="GO:0005739">
    <property type="term" value="C:mitochondrion"/>
    <property type="evidence" value="ECO:0000318"/>
    <property type="project" value="GO_Central"/>
</dbReference>
<dbReference type="GO" id="GO:0004799">
    <property type="term" value="F:thymidylate synthase activity"/>
    <property type="evidence" value="ECO:0000318"/>
    <property type="project" value="GO_Central"/>
</dbReference>
<dbReference type="GO" id="GO:0006231">
    <property type="term" value="P:dTMP biosynthetic process"/>
    <property type="evidence" value="ECO:0000318"/>
    <property type="project" value="GO_Central"/>
</dbReference>
<dbReference type="GO" id="GO:0006235">
    <property type="term" value="P:dTTP biosynthetic process"/>
    <property type="evidence" value="ECO:0007669"/>
    <property type="project" value="UniProtKB-UniPathway"/>
</dbReference>
<dbReference type="GO" id="GO:0032259">
    <property type="term" value="P:methylation"/>
    <property type="evidence" value="ECO:0007669"/>
    <property type="project" value="UniProtKB-KW"/>
</dbReference>
<dbReference type="CDD" id="cd00351">
    <property type="entry name" value="TS_Pyrimidine_HMase"/>
    <property type="match status" value="1"/>
</dbReference>
<dbReference type="FunFam" id="3.30.572.10:FF:000012">
    <property type="entry name" value="Thymidylate synthase"/>
    <property type="match status" value="1"/>
</dbReference>
<dbReference type="Gene3D" id="3.30.572.10">
    <property type="entry name" value="Thymidylate synthase/dCMP hydroxymethylase domain"/>
    <property type="match status" value="1"/>
</dbReference>
<dbReference type="HAMAP" id="MF_00008">
    <property type="entry name" value="Thymidy_synth_bact"/>
    <property type="match status" value="1"/>
</dbReference>
<dbReference type="InterPro" id="IPR045097">
    <property type="entry name" value="Thymidate_synth/dCMP_Mease"/>
</dbReference>
<dbReference type="InterPro" id="IPR023451">
    <property type="entry name" value="Thymidate_synth/dCMP_Mease_dom"/>
</dbReference>
<dbReference type="InterPro" id="IPR036926">
    <property type="entry name" value="Thymidate_synth/dCMP_Mease_sf"/>
</dbReference>
<dbReference type="InterPro" id="IPR000398">
    <property type="entry name" value="Thymidylate_synthase"/>
</dbReference>
<dbReference type="InterPro" id="IPR020940">
    <property type="entry name" value="Thymidylate_synthase_AS"/>
</dbReference>
<dbReference type="NCBIfam" id="TIGR03284">
    <property type="entry name" value="thym_sym"/>
    <property type="match status" value="1"/>
</dbReference>
<dbReference type="PANTHER" id="PTHR11548:SF2">
    <property type="entry name" value="THYMIDYLATE SYNTHASE"/>
    <property type="match status" value="1"/>
</dbReference>
<dbReference type="PANTHER" id="PTHR11548">
    <property type="entry name" value="THYMIDYLATE SYNTHASE 1"/>
    <property type="match status" value="1"/>
</dbReference>
<dbReference type="Pfam" id="PF00303">
    <property type="entry name" value="Thymidylat_synt"/>
    <property type="match status" value="1"/>
</dbReference>
<dbReference type="PRINTS" id="PR00108">
    <property type="entry name" value="THYMDSNTHASE"/>
</dbReference>
<dbReference type="SUPFAM" id="SSF55831">
    <property type="entry name" value="Thymidylate synthase/dCMP hydroxymethylase"/>
    <property type="match status" value="1"/>
</dbReference>
<dbReference type="PROSITE" id="PS00091">
    <property type="entry name" value="THYMIDYLATE_SYNTHASE"/>
    <property type="match status" value="1"/>
</dbReference>
<name>TYSY_CRYNJ</name>
<comment type="catalytic activity">
    <reaction>
        <text>dUMP + (6R)-5,10-methylene-5,6,7,8-tetrahydrofolate = 7,8-dihydrofolate + dTMP</text>
        <dbReference type="Rhea" id="RHEA:12104"/>
        <dbReference type="ChEBI" id="CHEBI:15636"/>
        <dbReference type="ChEBI" id="CHEBI:57451"/>
        <dbReference type="ChEBI" id="CHEBI:63528"/>
        <dbReference type="ChEBI" id="CHEBI:246422"/>
        <dbReference type="EC" id="2.1.1.45"/>
    </reaction>
</comment>
<comment type="pathway">
    <text>Pyrimidine metabolism; dTTP biosynthesis.</text>
</comment>
<comment type="subunit">
    <text evidence="1">Homodimer.</text>
</comment>
<comment type="similarity">
    <text evidence="3">Belongs to the thymidylate synthase family.</text>
</comment>
<organism>
    <name type="scientific">Cryptococcus neoformans var. neoformans serotype D (strain JEC21 / ATCC MYA-565)</name>
    <name type="common">Filobasidiella neoformans</name>
    <dbReference type="NCBI Taxonomy" id="214684"/>
    <lineage>
        <taxon>Eukaryota</taxon>
        <taxon>Fungi</taxon>
        <taxon>Dikarya</taxon>
        <taxon>Basidiomycota</taxon>
        <taxon>Agaricomycotina</taxon>
        <taxon>Tremellomycetes</taxon>
        <taxon>Tremellales</taxon>
        <taxon>Cryptococcaceae</taxon>
        <taxon>Cryptococcus</taxon>
        <taxon>Cryptococcus neoformans species complex</taxon>
    </lineage>
</organism>
<proteinExistence type="evidence at protein level"/>
<accession>P0CS12</accession>
<accession>P45351</accession>
<accession>Q55KW0</accession>
<accession>Q5KAL9</accession>
<keyword id="KW-0002">3D-structure</keyword>
<keyword id="KW-0489">Methyltransferase</keyword>
<keyword id="KW-0545">Nucleotide biosynthesis</keyword>
<keyword id="KW-1185">Reference proteome</keyword>
<keyword id="KW-0808">Transferase</keyword>
<reference key="1">
    <citation type="journal article" date="2005" name="Science">
        <title>The genome of the basidiomycetous yeast and human pathogen Cryptococcus neoformans.</title>
        <authorList>
            <person name="Loftus B.J."/>
            <person name="Fung E."/>
            <person name="Roncaglia P."/>
            <person name="Rowley D."/>
            <person name="Amedeo P."/>
            <person name="Bruno D."/>
            <person name="Vamathevan J."/>
            <person name="Miranda M."/>
            <person name="Anderson I.J."/>
            <person name="Fraser J.A."/>
            <person name="Allen J.E."/>
            <person name="Bosdet I.E."/>
            <person name="Brent M.R."/>
            <person name="Chiu R."/>
            <person name="Doering T.L."/>
            <person name="Donlin M.J."/>
            <person name="D'Souza C.A."/>
            <person name="Fox D.S."/>
            <person name="Grinberg V."/>
            <person name="Fu J."/>
            <person name="Fukushima M."/>
            <person name="Haas B.J."/>
            <person name="Huang J.C."/>
            <person name="Janbon G."/>
            <person name="Jones S.J.M."/>
            <person name="Koo H.L."/>
            <person name="Krzywinski M.I."/>
            <person name="Kwon-Chung K.J."/>
            <person name="Lengeler K.B."/>
            <person name="Maiti R."/>
            <person name="Marra M.A."/>
            <person name="Marra R.E."/>
            <person name="Mathewson C.A."/>
            <person name="Mitchell T.G."/>
            <person name="Pertea M."/>
            <person name="Riggs F.R."/>
            <person name="Salzberg S.L."/>
            <person name="Schein J.E."/>
            <person name="Shvartsbeyn A."/>
            <person name="Shin H."/>
            <person name="Shumway M."/>
            <person name="Specht C.A."/>
            <person name="Suh B.B."/>
            <person name="Tenney A."/>
            <person name="Utterback T.R."/>
            <person name="Wickes B.L."/>
            <person name="Wortman J.R."/>
            <person name="Wye N.H."/>
            <person name="Kronstad J.W."/>
            <person name="Lodge J.K."/>
            <person name="Heitman J."/>
            <person name="Davis R.W."/>
            <person name="Fraser C.M."/>
            <person name="Hyman R.W."/>
        </authorList>
    </citation>
    <scope>NUCLEOTIDE SEQUENCE [LARGE SCALE GENOMIC DNA]</scope>
    <source>
        <strain>JEC21 / ATCC MYA-565</strain>
    </source>
</reference>
<gene>
    <name type="primary">TMP1</name>
    <name type="ordered locus">CNJ01230</name>
</gene>
<sequence length="317" mass="35866">MTATIDDQEKNQRSNPDHEEYQYLDLIRRIINVGEVRPDRTGTGTVALFAPPSFRFSLADNTLPLLTTKRVFLRGVIAELLWFVSGCTDAKMLSSQGVGIWDGNGSKEFLEKVGLGHRREGDLGPVYGFQWRHFGAEYTDADGDYKGKGVDQLQRVIDTIKNNPTDRRIILSAWNPKDLPLMALPPCHMFCQFFVSLPPADSPGSKPKLSCLMYQRSCDLGLGVPFNIASYALLTHMIALITDTEPHEFILQMGDAHVYRDHVEPLKTQLEREPRDFPKLKWARSKEEIGDIDGFKVEDFVVEGYKPWGKIDMKMSA</sequence>
<protein>
    <recommendedName>
        <fullName>Thymidylate synthase</fullName>
        <shortName>TS</shortName>
        <shortName>TSase</shortName>
        <ecNumber>2.1.1.45</ecNumber>
    </recommendedName>
</protein>